<proteinExistence type="inferred from homology"/>
<feature type="signal peptide" evidence="1">
    <location>
        <begin position="1"/>
        <end position="19"/>
    </location>
</feature>
<feature type="chain" id="PRO_0000281190" description="LPS-assembly lipoprotein LptE">
    <location>
        <begin position="20"/>
        <end position="192"/>
    </location>
</feature>
<feature type="lipid moiety-binding region" description="N-palmitoyl cysteine" evidence="1">
    <location>
        <position position="20"/>
    </location>
</feature>
<feature type="lipid moiety-binding region" description="S-diacylglycerol cysteine" evidence="1">
    <location>
        <position position="20"/>
    </location>
</feature>
<protein>
    <recommendedName>
        <fullName evidence="1">LPS-assembly lipoprotein LptE</fullName>
    </recommendedName>
</protein>
<organism>
    <name type="scientific">Sodalis glossinidius (strain morsitans)</name>
    <dbReference type="NCBI Taxonomy" id="343509"/>
    <lineage>
        <taxon>Bacteria</taxon>
        <taxon>Pseudomonadati</taxon>
        <taxon>Pseudomonadota</taxon>
        <taxon>Gammaproteobacteria</taxon>
        <taxon>Enterobacterales</taxon>
        <taxon>Bruguierivoracaceae</taxon>
        <taxon>Sodalis</taxon>
    </lineage>
</organism>
<name>LPTE_SODGM</name>
<evidence type="ECO:0000255" key="1">
    <source>
        <dbReference type="HAMAP-Rule" id="MF_01186"/>
    </source>
</evidence>
<keyword id="KW-0998">Cell outer membrane</keyword>
<keyword id="KW-0449">Lipoprotein</keyword>
<keyword id="KW-0472">Membrane</keyword>
<keyword id="KW-0564">Palmitate</keyword>
<keyword id="KW-0732">Signal</keyword>
<comment type="function">
    <text evidence="1">Together with LptD, is involved in the assembly of lipopolysaccharide (LPS) at the surface of the outer membrane. Required for the proper assembly of LptD. Binds LPS and may serve as the LPS recognition site at the outer membrane.</text>
</comment>
<comment type="subunit">
    <text evidence="1">Component of the lipopolysaccharide transport and assembly complex. Interacts with LptD.</text>
</comment>
<comment type="subcellular location">
    <subcellularLocation>
        <location evidence="1">Cell outer membrane</location>
        <topology evidence="1">Lipid-anchor</topology>
    </subcellularLocation>
</comment>
<comment type="similarity">
    <text evidence="1">Belongs to the LptE lipoprotein family.</text>
</comment>
<gene>
    <name evidence="1" type="primary">lptE</name>
    <name type="synonym">rlpB</name>
    <name type="ordered locus">SG0802</name>
</gene>
<reference key="1">
    <citation type="journal article" date="2006" name="Genome Res.">
        <title>Massive genome erosion and functional adaptations provide insights into the symbiotic lifestyle of Sodalis glossinidius in the tsetse host.</title>
        <authorList>
            <person name="Toh H."/>
            <person name="Weiss B.L."/>
            <person name="Perkin S.A.H."/>
            <person name="Yamashita A."/>
            <person name="Oshima K."/>
            <person name="Hattori M."/>
            <person name="Aksoy S."/>
        </authorList>
    </citation>
    <scope>NUCLEOTIDE SEQUENCE [LARGE SCALE GENOMIC DNA]</scope>
    <source>
        <strain>morsitans</strain>
    </source>
</reference>
<dbReference type="EMBL" id="AP008232">
    <property type="protein sequence ID" value="BAE74077.1"/>
    <property type="molecule type" value="Genomic_DNA"/>
</dbReference>
<dbReference type="RefSeq" id="WP_011410665.1">
    <property type="nucleotide sequence ID" value="NC_007712.1"/>
</dbReference>
<dbReference type="SMR" id="Q2NUU8"/>
<dbReference type="STRING" id="343509.SG0802"/>
<dbReference type="KEGG" id="sgl:SG0802"/>
<dbReference type="eggNOG" id="COG2980">
    <property type="taxonomic scope" value="Bacteria"/>
</dbReference>
<dbReference type="HOGENOM" id="CLU_103309_1_1_6"/>
<dbReference type="OrthoDB" id="5801564at2"/>
<dbReference type="BioCyc" id="SGLO343509:SGP1_RS07060-MONOMER"/>
<dbReference type="Proteomes" id="UP000001932">
    <property type="component" value="Chromosome"/>
</dbReference>
<dbReference type="GO" id="GO:0009279">
    <property type="term" value="C:cell outer membrane"/>
    <property type="evidence" value="ECO:0007669"/>
    <property type="project" value="UniProtKB-SubCell"/>
</dbReference>
<dbReference type="GO" id="GO:1990351">
    <property type="term" value="C:transporter complex"/>
    <property type="evidence" value="ECO:0007669"/>
    <property type="project" value="TreeGrafter"/>
</dbReference>
<dbReference type="GO" id="GO:0001530">
    <property type="term" value="F:lipopolysaccharide binding"/>
    <property type="evidence" value="ECO:0007669"/>
    <property type="project" value="TreeGrafter"/>
</dbReference>
<dbReference type="GO" id="GO:0043165">
    <property type="term" value="P:Gram-negative-bacterium-type cell outer membrane assembly"/>
    <property type="evidence" value="ECO:0007669"/>
    <property type="project" value="UniProtKB-UniRule"/>
</dbReference>
<dbReference type="GO" id="GO:0015920">
    <property type="term" value="P:lipopolysaccharide transport"/>
    <property type="evidence" value="ECO:0007669"/>
    <property type="project" value="TreeGrafter"/>
</dbReference>
<dbReference type="Gene3D" id="3.30.160.150">
    <property type="entry name" value="Lipoprotein like domain"/>
    <property type="match status" value="1"/>
</dbReference>
<dbReference type="HAMAP" id="MF_01186">
    <property type="entry name" value="LPS_assembly_LptE"/>
    <property type="match status" value="1"/>
</dbReference>
<dbReference type="InterPro" id="IPR007485">
    <property type="entry name" value="LPS_assembly_LptE"/>
</dbReference>
<dbReference type="NCBIfam" id="NF008062">
    <property type="entry name" value="PRK10796.1"/>
    <property type="match status" value="1"/>
</dbReference>
<dbReference type="PANTHER" id="PTHR38098">
    <property type="entry name" value="LPS-ASSEMBLY LIPOPROTEIN LPTE"/>
    <property type="match status" value="1"/>
</dbReference>
<dbReference type="PANTHER" id="PTHR38098:SF1">
    <property type="entry name" value="LPS-ASSEMBLY LIPOPROTEIN LPTE"/>
    <property type="match status" value="1"/>
</dbReference>
<dbReference type="Pfam" id="PF04390">
    <property type="entry name" value="LptE"/>
    <property type="match status" value="1"/>
</dbReference>
<dbReference type="PROSITE" id="PS51257">
    <property type="entry name" value="PROKAR_LIPOPROTEIN"/>
    <property type="match status" value="1"/>
</dbReference>
<sequence>MRYWTLALVLGLAVTITAGCGYHLRGTTDQVPTEMKTMTLNSYDPYGPLTRAVRAELRLNDVTLVDDAQDKNNTLPSLRIVNSSENQVTASVFQDGKTAEYQMTLGVHAQVLMPGEDYYPIDVKVYRSFFDNPLTALAKDAEGDIIRQEMRQQAAQQLVRKLLTVHAAEEADKALDAKLKQQQPPQPVAPAS</sequence>
<accession>Q2NUU8</accession>